<sequence>MGQKIHPLGFRLGVTQSHLSNWCVQPSQYSELLQEDEKLRGCIKEYVRKYVRTAENYGGIDRIEIQRKTSAIKVEIHTGFPKLFVEKLGPRLKEIRREMQNTLQKSKHLKFIISLAEVEKPYAKATILAEYIAVQVERRVAFRKTIKKAIQLAKEQGNVKGIKIQIAGRLNGAEIARSEWAREGRVPLQTLRAQIDYCHYPAHTIYGVLGIRVWIFQEK</sequence>
<proteinExistence type="inferred from homology"/>
<feature type="chain" id="PRO_0000230761" description="Small ribosomal subunit protein uS3c">
    <location>
        <begin position="1"/>
        <end position="219"/>
    </location>
</feature>
<feature type="domain" description="KH type-2">
    <location>
        <begin position="47"/>
        <end position="119"/>
    </location>
</feature>
<organism>
    <name type="scientific">Staurastrum punctulatum</name>
    <name type="common">Green alga</name>
    <name type="synonym">Cosmoastrum punctulatum</name>
    <dbReference type="NCBI Taxonomy" id="102822"/>
    <lineage>
        <taxon>Eukaryota</taxon>
        <taxon>Viridiplantae</taxon>
        <taxon>Streptophyta</taxon>
        <taxon>Zygnematophyceae</taxon>
        <taxon>Zygnematophycidae</taxon>
        <taxon>Desmidiales</taxon>
        <taxon>Desmidiaceae</taxon>
        <taxon>Staurastrum</taxon>
    </lineage>
</organism>
<protein>
    <recommendedName>
        <fullName evidence="2">Small ribosomal subunit protein uS3c</fullName>
    </recommendedName>
    <alternativeName>
        <fullName>30S ribosomal protein S3, chloroplastic</fullName>
    </alternativeName>
</protein>
<evidence type="ECO:0000250" key="1"/>
<evidence type="ECO:0000305" key="2"/>
<reference key="1">
    <citation type="journal article" date="2005" name="BMC Biol.">
        <title>The complete chloroplast DNA sequences of the charophycean green algae Staurastrum and Zygnema reveal that the chloroplast genome underwent extensive changes during the evolution of the Zygnematales.</title>
        <authorList>
            <person name="Turmel M."/>
            <person name="Otis C."/>
            <person name="Lemieux C."/>
        </authorList>
    </citation>
    <scope>NUCLEOTIDE SEQUENCE [LARGE SCALE GENOMIC DNA]</scope>
</reference>
<accession>Q32RV4</accession>
<keyword id="KW-0150">Chloroplast</keyword>
<keyword id="KW-0934">Plastid</keyword>
<keyword id="KW-0687">Ribonucleoprotein</keyword>
<keyword id="KW-0689">Ribosomal protein</keyword>
<keyword id="KW-0694">RNA-binding</keyword>
<keyword id="KW-0699">rRNA-binding</keyword>
<geneLocation type="chloroplast"/>
<gene>
    <name type="primary">rps3</name>
</gene>
<comment type="subunit">
    <text evidence="1">Part of the 30S ribosomal subunit.</text>
</comment>
<comment type="subcellular location">
    <subcellularLocation>
        <location>Plastid</location>
        <location>Chloroplast</location>
    </subcellularLocation>
</comment>
<comment type="similarity">
    <text evidence="2">Belongs to the universal ribosomal protein uS3 family.</text>
</comment>
<dbReference type="EMBL" id="AY958085">
    <property type="protein sequence ID" value="AAX45758.1"/>
    <property type="molecule type" value="Genomic_DNA"/>
</dbReference>
<dbReference type="RefSeq" id="YP_636422.1">
    <property type="nucleotide sequence ID" value="NC_008116.1"/>
</dbReference>
<dbReference type="SMR" id="Q32RV4"/>
<dbReference type="GeneID" id="4108632"/>
<dbReference type="GO" id="GO:0009507">
    <property type="term" value="C:chloroplast"/>
    <property type="evidence" value="ECO:0007669"/>
    <property type="project" value="UniProtKB-SubCell"/>
</dbReference>
<dbReference type="GO" id="GO:0022627">
    <property type="term" value="C:cytosolic small ribosomal subunit"/>
    <property type="evidence" value="ECO:0007669"/>
    <property type="project" value="TreeGrafter"/>
</dbReference>
<dbReference type="GO" id="GO:0019843">
    <property type="term" value="F:rRNA binding"/>
    <property type="evidence" value="ECO:0007669"/>
    <property type="project" value="UniProtKB-UniRule"/>
</dbReference>
<dbReference type="GO" id="GO:0003735">
    <property type="term" value="F:structural constituent of ribosome"/>
    <property type="evidence" value="ECO:0007669"/>
    <property type="project" value="InterPro"/>
</dbReference>
<dbReference type="GO" id="GO:0006412">
    <property type="term" value="P:translation"/>
    <property type="evidence" value="ECO:0007669"/>
    <property type="project" value="UniProtKB-UniRule"/>
</dbReference>
<dbReference type="CDD" id="cd02412">
    <property type="entry name" value="KH-II_30S_S3"/>
    <property type="match status" value="1"/>
</dbReference>
<dbReference type="Gene3D" id="3.30.300.20">
    <property type="match status" value="1"/>
</dbReference>
<dbReference type="Gene3D" id="3.30.1140.32">
    <property type="entry name" value="Ribosomal protein S3, C-terminal domain"/>
    <property type="match status" value="1"/>
</dbReference>
<dbReference type="HAMAP" id="MF_01309_B">
    <property type="entry name" value="Ribosomal_uS3_B"/>
    <property type="match status" value="1"/>
</dbReference>
<dbReference type="InterPro" id="IPR015946">
    <property type="entry name" value="KH_dom-like_a/b"/>
</dbReference>
<dbReference type="InterPro" id="IPR004044">
    <property type="entry name" value="KH_dom_type_2"/>
</dbReference>
<dbReference type="InterPro" id="IPR009019">
    <property type="entry name" value="KH_sf_prok-type"/>
</dbReference>
<dbReference type="InterPro" id="IPR036419">
    <property type="entry name" value="Ribosomal_S3_C_sf"/>
</dbReference>
<dbReference type="InterPro" id="IPR005704">
    <property type="entry name" value="Ribosomal_uS3_bac-typ"/>
</dbReference>
<dbReference type="InterPro" id="IPR001351">
    <property type="entry name" value="Ribosomal_uS3_C"/>
</dbReference>
<dbReference type="InterPro" id="IPR018280">
    <property type="entry name" value="Ribosomal_uS3_CS"/>
</dbReference>
<dbReference type="NCBIfam" id="TIGR01009">
    <property type="entry name" value="rpsC_bact"/>
    <property type="match status" value="1"/>
</dbReference>
<dbReference type="PANTHER" id="PTHR11760">
    <property type="entry name" value="30S/40S RIBOSOMAL PROTEIN S3"/>
    <property type="match status" value="1"/>
</dbReference>
<dbReference type="PANTHER" id="PTHR11760:SF19">
    <property type="entry name" value="SMALL RIBOSOMAL SUBUNIT PROTEIN US3C"/>
    <property type="match status" value="1"/>
</dbReference>
<dbReference type="Pfam" id="PF00189">
    <property type="entry name" value="Ribosomal_S3_C"/>
    <property type="match status" value="1"/>
</dbReference>
<dbReference type="SUPFAM" id="SSF54814">
    <property type="entry name" value="Prokaryotic type KH domain (KH-domain type II)"/>
    <property type="match status" value="1"/>
</dbReference>
<dbReference type="SUPFAM" id="SSF54821">
    <property type="entry name" value="Ribosomal protein S3 C-terminal domain"/>
    <property type="match status" value="1"/>
</dbReference>
<dbReference type="PROSITE" id="PS50823">
    <property type="entry name" value="KH_TYPE_2"/>
    <property type="match status" value="1"/>
</dbReference>
<dbReference type="PROSITE" id="PS00548">
    <property type="entry name" value="RIBOSOMAL_S3"/>
    <property type="match status" value="1"/>
</dbReference>
<name>RR3_STAPU</name>